<keyword id="KW-0963">Cytoplasm</keyword>
<keyword id="KW-0342">GTP-binding</keyword>
<keyword id="KW-0436">Ligase</keyword>
<keyword id="KW-0460">Magnesium</keyword>
<keyword id="KW-0479">Metal-binding</keyword>
<keyword id="KW-0547">Nucleotide-binding</keyword>
<keyword id="KW-0658">Purine biosynthesis</keyword>
<sequence length="432" mass="46717">MAKNVVVLGTQWGDEGKGKVVDLLTDRAKYVVRYQGGHNAGHTLVIDGEKTVLHLIPSGILRDNVTCIIGNGVVLSPDALMKEMTMLEERGVPVRERLKISEACPLILPYHIALDVAREKARGAKAIGTTGRGIGPAYEDKVARRGLRVGDLFNAEDFAAKLKEVLDVHNFTLTQYYGEEAVDFEETLNGAMEVADILKAMVVDVTDELDKAHKAGLPIMFEGAQGTLLDIDHGTYPYVTSSNTTVGGVATGAGFGPLKLDYVLGIVKAYTTRVGSGPFPTELDCEVGQHLGVKGHEFGATTGRKRRTGWFDAVAMKRAVQINSITGFCLTKLDVLDGLESLQICVGYKDADGNVKDVPPMAADGYDKVTPVYEEMPGWTDNTFGVTEFEGLPQAAKNYIKRLEELTGVPVDIVSTGPDRNETIVLRSPYDA</sequence>
<comment type="function">
    <text evidence="1">Plays an important role in the de novo pathway of purine nucleotide biosynthesis. Catalyzes the first committed step in the biosynthesis of AMP from IMP.</text>
</comment>
<comment type="catalytic activity">
    <reaction evidence="1">
        <text>IMP + L-aspartate + GTP = N(6)-(1,2-dicarboxyethyl)-AMP + GDP + phosphate + 2 H(+)</text>
        <dbReference type="Rhea" id="RHEA:15753"/>
        <dbReference type="ChEBI" id="CHEBI:15378"/>
        <dbReference type="ChEBI" id="CHEBI:29991"/>
        <dbReference type="ChEBI" id="CHEBI:37565"/>
        <dbReference type="ChEBI" id="CHEBI:43474"/>
        <dbReference type="ChEBI" id="CHEBI:57567"/>
        <dbReference type="ChEBI" id="CHEBI:58053"/>
        <dbReference type="ChEBI" id="CHEBI:58189"/>
        <dbReference type="EC" id="6.3.4.4"/>
    </reaction>
</comment>
<comment type="cofactor">
    <cofactor evidence="1">
        <name>Mg(2+)</name>
        <dbReference type="ChEBI" id="CHEBI:18420"/>
    </cofactor>
    <text evidence="1">Binds 1 Mg(2+) ion per subunit.</text>
</comment>
<comment type="pathway">
    <text evidence="1">Purine metabolism; AMP biosynthesis via de novo pathway; AMP from IMP: step 1/2.</text>
</comment>
<comment type="subunit">
    <text evidence="1">Homodimer.</text>
</comment>
<comment type="subcellular location">
    <subcellularLocation>
        <location evidence="1">Cytoplasm</location>
    </subcellularLocation>
</comment>
<comment type="similarity">
    <text evidence="1">Belongs to the adenylosuccinate synthetase family.</text>
</comment>
<protein>
    <recommendedName>
        <fullName evidence="1">Adenylosuccinate synthetase</fullName>
        <shortName evidence="1">AMPSase</shortName>
        <shortName evidence="1">AdSS</shortName>
        <ecNumber evidence="1">6.3.4.4</ecNumber>
    </recommendedName>
    <alternativeName>
        <fullName evidence="1">IMP--aspartate ligase</fullName>
    </alternativeName>
</protein>
<evidence type="ECO:0000255" key="1">
    <source>
        <dbReference type="HAMAP-Rule" id="MF_00011"/>
    </source>
</evidence>
<feature type="chain" id="PRO_1000089266" description="Adenylosuccinate synthetase">
    <location>
        <begin position="1"/>
        <end position="432"/>
    </location>
</feature>
<feature type="active site" description="Proton acceptor" evidence="1">
    <location>
        <position position="14"/>
    </location>
</feature>
<feature type="active site" description="Proton donor" evidence="1">
    <location>
        <position position="42"/>
    </location>
</feature>
<feature type="binding site" evidence="1">
    <location>
        <begin position="13"/>
        <end position="19"/>
    </location>
    <ligand>
        <name>GTP</name>
        <dbReference type="ChEBI" id="CHEBI:37565"/>
    </ligand>
</feature>
<feature type="binding site" description="in other chain" evidence="1">
    <location>
        <begin position="14"/>
        <end position="17"/>
    </location>
    <ligand>
        <name>IMP</name>
        <dbReference type="ChEBI" id="CHEBI:58053"/>
        <note>ligand shared between dimeric partners</note>
    </ligand>
</feature>
<feature type="binding site" evidence="1">
    <location>
        <position position="14"/>
    </location>
    <ligand>
        <name>Mg(2+)</name>
        <dbReference type="ChEBI" id="CHEBI:18420"/>
    </ligand>
</feature>
<feature type="binding site" description="in other chain" evidence="1">
    <location>
        <begin position="39"/>
        <end position="42"/>
    </location>
    <ligand>
        <name>IMP</name>
        <dbReference type="ChEBI" id="CHEBI:58053"/>
        <note>ligand shared between dimeric partners</note>
    </ligand>
</feature>
<feature type="binding site" evidence="1">
    <location>
        <begin position="41"/>
        <end position="43"/>
    </location>
    <ligand>
        <name>GTP</name>
        <dbReference type="ChEBI" id="CHEBI:37565"/>
    </ligand>
</feature>
<feature type="binding site" evidence="1">
    <location>
        <position position="41"/>
    </location>
    <ligand>
        <name>Mg(2+)</name>
        <dbReference type="ChEBI" id="CHEBI:18420"/>
    </ligand>
</feature>
<feature type="binding site" description="in other chain" evidence="1">
    <location>
        <position position="130"/>
    </location>
    <ligand>
        <name>IMP</name>
        <dbReference type="ChEBI" id="CHEBI:58053"/>
        <note>ligand shared between dimeric partners</note>
    </ligand>
</feature>
<feature type="binding site" evidence="1">
    <location>
        <position position="144"/>
    </location>
    <ligand>
        <name>IMP</name>
        <dbReference type="ChEBI" id="CHEBI:58053"/>
        <note>ligand shared between dimeric partners</note>
    </ligand>
</feature>
<feature type="binding site" description="in other chain" evidence="1">
    <location>
        <position position="225"/>
    </location>
    <ligand>
        <name>IMP</name>
        <dbReference type="ChEBI" id="CHEBI:58053"/>
        <note>ligand shared between dimeric partners</note>
    </ligand>
</feature>
<feature type="binding site" description="in other chain" evidence="1">
    <location>
        <position position="240"/>
    </location>
    <ligand>
        <name>IMP</name>
        <dbReference type="ChEBI" id="CHEBI:58053"/>
        <note>ligand shared between dimeric partners</note>
    </ligand>
</feature>
<feature type="binding site" evidence="1">
    <location>
        <begin position="300"/>
        <end position="306"/>
    </location>
    <ligand>
        <name>substrate</name>
    </ligand>
</feature>
<feature type="binding site" description="in other chain" evidence="1">
    <location>
        <position position="304"/>
    </location>
    <ligand>
        <name>IMP</name>
        <dbReference type="ChEBI" id="CHEBI:58053"/>
        <note>ligand shared between dimeric partners</note>
    </ligand>
</feature>
<feature type="binding site" evidence="1">
    <location>
        <position position="306"/>
    </location>
    <ligand>
        <name>GTP</name>
        <dbReference type="ChEBI" id="CHEBI:37565"/>
    </ligand>
</feature>
<feature type="binding site" evidence="1">
    <location>
        <begin position="332"/>
        <end position="334"/>
    </location>
    <ligand>
        <name>GTP</name>
        <dbReference type="ChEBI" id="CHEBI:37565"/>
    </ligand>
</feature>
<feature type="binding site" evidence="1">
    <location>
        <begin position="415"/>
        <end position="417"/>
    </location>
    <ligand>
        <name>GTP</name>
        <dbReference type="ChEBI" id="CHEBI:37565"/>
    </ligand>
</feature>
<proteinExistence type="inferred from homology"/>
<gene>
    <name evidence="1" type="primary">purA</name>
    <name type="ordered locus">MADE_1002935</name>
</gene>
<organism>
    <name type="scientific">Alteromonas mediterranea (strain DSM 17117 / CIP 110805 / LMG 28347 / Deep ecotype)</name>
    <dbReference type="NCBI Taxonomy" id="1774373"/>
    <lineage>
        <taxon>Bacteria</taxon>
        <taxon>Pseudomonadati</taxon>
        <taxon>Pseudomonadota</taxon>
        <taxon>Gammaproteobacteria</taxon>
        <taxon>Alteromonadales</taxon>
        <taxon>Alteromonadaceae</taxon>
        <taxon>Alteromonas/Salinimonas group</taxon>
        <taxon>Alteromonas</taxon>
    </lineage>
</organism>
<accession>B4S195</accession>
<accession>F2G7F5</accession>
<name>PURA_ALTMD</name>
<reference key="1">
    <citation type="journal article" date="2008" name="ISME J.">
        <title>Comparative genomics of two ecotypes of the marine planktonic copiotroph Alteromonas macleodii suggests alternative lifestyles associated with different kinds of particulate organic matter.</title>
        <authorList>
            <person name="Ivars-Martinez E."/>
            <person name="Martin-Cuadrado A.-B."/>
            <person name="D'Auria G."/>
            <person name="Mira A."/>
            <person name="Ferriera S."/>
            <person name="Johnson J."/>
            <person name="Friedman R."/>
            <person name="Rodriguez-Valera F."/>
        </authorList>
    </citation>
    <scope>NUCLEOTIDE SEQUENCE [LARGE SCALE GENOMIC DNA]</scope>
    <source>
        <strain>DSM 17117 / CIP 110805 / LMG 28347 / Deep ecotype</strain>
    </source>
</reference>
<dbReference type="EC" id="6.3.4.4" evidence="1"/>
<dbReference type="EMBL" id="CP001103">
    <property type="protein sequence ID" value="AEA96735.1"/>
    <property type="molecule type" value="Genomic_DNA"/>
</dbReference>
<dbReference type="RefSeq" id="WP_012517090.1">
    <property type="nucleotide sequence ID" value="NC_011138.3"/>
</dbReference>
<dbReference type="SMR" id="B4S195"/>
<dbReference type="KEGG" id="amc:MADE_1002935"/>
<dbReference type="HOGENOM" id="CLU_029848_0_0_6"/>
<dbReference type="UniPathway" id="UPA00075">
    <property type="reaction ID" value="UER00335"/>
</dbReference>
<dbReference type="Proteomes" id="UP000001870">
    <property type="component" value="Chromosome"/>
</dbReference>
<dbReference type="GO" id="GO:0005737">
    <property type="term" value="C:cytoplasm"/>
    <property type="evidence" value="ECO:0007669"/>
    <property type="project" value="UniProtKB-SubCell"/>
</dbReference>
<dbReference type="GO" id="GO:0004019">
    <property type="term" value="F:adenylosuccinate synthase activity"/>
    <property type="evidence" value="ECO:0007669"/>
    <property type="project" value="UniProtKB-UniRule"/>
</dbReference>
<dbReference type="GO" id="GO:0005525">
    <property type="term" value="F:GTP binding"/>
    <property type="evidence" value="ECO:0007669"/>
    <property type="project" value="UniProtKB-UniRule"/>
</dbReference>
<dbReference type="GO" id="GO:0000287">
    <property type="term" value="F:magnesium ion binding"/>
    <property type="evidence" value="ECO:0007669"/>
    <property type="project" value="UniProtKB-UniRule"/>
</dbReference>
<dbReference type="GO" id="GO:0044208">
    <property type="term" value="P:'de novo' AMP biosynthetic process"/>
    <property type="evidence" value="ECO:0007669"/>
    <property type="project" value="UniProtKB-UniRule"/>
</dbReference>
<dbReference type="GO" id="GO:0046040">
    <property type="term" value="P:IMP metabolic process"/>
    <property type="evidence" value="ECO:0007669"/>
    <property type="project" value="TreeGrafter"/>
</dbReference>
<dbReference type="CDD" id="cd03108">
    <property type="entry name" value="AdSS"/>
    <property type="match status" value="1"/>
</dbReference>
<dbReference type="FunFam" id="1.10.300.10:FF:000001">
    <property type="entry name" value="Adenylosuccinate synthetase"/>
    <property type="match status" value="1"/>
</dbReference>
<dbReference type="FunFam" id="3.90.170.10:FF:000001">
    <property type="entry name" value="Adenylosuccinate synthetase"/>
    <property type="match status" value="1"/>
</dbReference>
<dbReference type="Gene3D" id="3.40.440.10">
    <property type="entry name" value="Adenylosuccinate Synthetase, subunit A, domain 1"/>
    <property type="match status" value="1"/>
</dbReference>
<dbReference type="Gene3D" id="1.10.300.10">
    <property type="entry name" value="Adenylosuccinate Synthetase, subunit A, domain 2"/>
    <property type="match status" value="1"/>
</dbReference>
<dbReference type="Gene3D" id="3.90.170.10">
    <property type="entry name" value="Adenylosuccinate Synthetase, subunit A, domain 3"/>
    <property type="match status" value="1"/>
</dbReference>
<dbReference type="HAMAP" id="MF_00011">
    <property type="entry name" value="Adenylosucc_synth"/>
    <property type="match status" value="1"/>
</dbReference>
<dbReference type="InterPro" id="IPR018220">
    <property type="entry name" value="Adenylosuccin_syn_GTP-bd"/>
</dbReference>
<dbReference type="InterPro" id="IPR033128">
    <property type="entry name" value="Adenylosuccin_syn_Lys_AS"/>
</dbReference>
<dbReference type="InterPro" id="IPR042109">
    <property type="entry name" value="Adenylosuccinate_synth_dom1"/>
</dbReference>
<dbReference type="InterPro" id="IPR042110">
    <property type="entry name" value="Adenylosuccinate_synth_dom2"/>
</dbReference>
<dbReference type="InterPro" id="IPR042111">
    <property type="entry name" value="Adenylosuccinate_synth_dom3"/>
</dbReference>
<dbReference type="InterPro" id="IPR001114">
    <property type="entry name" value="Adenylosuccinate_synthetase"/>
</dbReference>
<dbReference type="InterPro" id="IPR027417">
    <property type="entry name" value="P-loop_NTPase"/>
</dbReference>
<dbReference type="NCBIfam" id="NF002223">
    <property type="entry name" value="PRK01117.1"/>
    <property type="match status" value="1"/>
</dbReference>
<dbReference type="NCBIfam" id="TIGR00184">
    <property type="entry name" value="purA"/>
    <property type="match status" value="1"/>
</dbReference>
<dbReference type="PANTHER" id="PTHR11846">
    <property type="entry name" value="ADENYLOSUCCINATE SYNTHETASE"/>
    <property type="match status" value="1"/>
</dbReference>
<dbReference type="PANTHER" id="PTHR11846:SF0">
    <property type="entry name" value="ADENYLOSUCCINATE SYNTHETASE"/>
    <property type="match status" value="1"/>
</dbReference>
<dbReference type="Pfam" id="PF00709">
    <property type="entry name" value="Adenylsucc_synt"/>
    <property type="match status" value="1"/>
</dbReference>
<dbReference type="SMART" id="SM00788">
    <property type="entry name" value="Adenylsucc_synt"/>
    <property type="match status" value="1"/>
</dbReference>
<dbReference type="SUPFAM" id="SSF52540">
    <property type="entry name" value="P-loop containing nucleoside triphosphate hydrolases"/>
    <property type="match status" value="1"/>
</dbReference>
<dbReference type="PROSITE" id="PS01266">
    <property type="entry name" value="ADENYLOSUCCIN_SYN_1"/>
    <property type="match status" value="1"/>
</dbReference>
<dbReference type="PROSITE" id="PS00513">
    <property type="entry name" value="ADENYLOSUCCIN_SYN_2"/>
    <property type="match status" value="1"/>
</dbReference>